<proteinExistence type="evidence at protein level"/>
<name>RASD1_MOUSE</name>
<dbReference type="EMBL" id="AF009246">
    <property type="protein sequence ID" value="AAC53538.1"/>
    <property type="molecule type" value="mRNA"/>
</dbReference>
<dbReference type="EMBL" id="AK038932">
    <property type="protein sequence ID" value="BAC30173.1"/>
    <property type="molecule type" value="mRNA"/>
</dbReference>
<dbReference type="EMBL" id="BC034166">
    <property type="protein sequence ID" value="AAH34166.1"/>
    <property type="molecule type" value="mRNA"/>
</dbReference>
<dbReference type="CCDS" id="CCDS24781.1"/>
<dbReference type="RefSeq" id="NP_033052.1">
    <property type="nucleotide sequence ID" value="NM_009026.5"/>
</dbReference>
<dbReference type="SMR" id="O35626"/>
<dbReference type="BioGRID" id="202599">
    <property type="interactions" value="8"/>
</dbReference>
<dbReference type="CORUM" id="O35626"/>
<dbReference type="FunCoup" id="O35626">
    <property type="interactions" value="1914"/>
</dbReference>
<dbReference type="IntAct" id="O35626">
    <property type="interactions" value="8"/>
</dbReference>
<dbReference type="STRING" id="10090.ENSMUSP00000051959"/>
<dbReference type="iPTMnet" id="O35626"/>
<dbReference type="PhosphoSitePlus" id="O35626"/>
<dbReference type="PaxDb" id="10090-ENSMUSP00000051959"/>
<dbReference type="ProteomicsDB" id="300235"/>
<dbReference type="Antibodypedia" id="25457">
    <property type="antibodies" value="85 antibodies from 22 providers"/>
</dbReference>
<dbReference type="DNASU" id="19416"/>
<dbReference type="Ensembl" id="ENSMUST00000062405.8">
    <property type="protein sequence ID" value="ENSMUSP00000051959.8"/>
    <property type="gene ID" value="ENSMUSG00000049892.8"/>
</dbReference>
<dbReference type="GeneID" id="19416"/>
<dbReference type="KEGG" id="mmu:19416"/>
<dbReference type="UCSC" id="uc007jfh.2">
    <property type="organism name" value="mouse"/>
</dbReference>
<dbReference type="AGR" id="MGI:1270848"/>
<dbReference type="CTD" id="51655"/>
<dbReference type="MGI" id="MGI:1270848">
    <property type="gene designation" value="Rasd1"/>
</dbReference>
<dbReference type="VEuPathDB" id="HostDB:ENSMUSG00000049892"/>
<dbReference type="eggNOG" id="KOG0395">
    <property type="taxonomic scope" value="Eukaryota"/>
</dbReference>
<dbReference type="GeneTree" id="ENSGT00940000161274"/>
<dbReference type="HOGENOM" id="CLU_041217_9_3_1"/>
<dbReference type="InParanoid" id="O35626"/>
<dbReference type="OMA" id="VSIQYCD"/>
<dbReference type="OrthoDB" id="265044at2759"/>
<dbReference type="PhylomeDB" id="O35626"/>
<dbReference type="TreeFam" id="TF316238"/>
<dbReference type="BioGRID-ORCS" id="19416">
    <property type="hits" value="1 hit in 78 CRISPR screens"/>
</dbReference>
<dbReference type="ChiTaRS" id="Rasd1">
    <property type="organism name" value="mouse"/>
</dbReference>
<dbReference type="PRO" id="PR:O35626"/>
<dbReference type="Proteomes" id="UP000000589">
    <property type="component" value="Chromosome 11"/>
</dbReference>
<dbReference type="RNAct" id="O35626">
    <property type="molecule type" value="protein"/>
</dbReference>
<dbReference type="Bgee" id="ENSMUSG00000049892">
    <property type="expression patterns" value="Expressed in gonadal fat pad and 121 other cell types or tissues"/>
</dbReference>
<dbReference type="ExpressionAtlas" id="O35626">
    <property type="expression patterns" value="baseline and differential"/>
</dbReference>
<dbReference type="GO" id="GO:0005634">
    <property type="term" value="C:nucleus"/>
    <property type="evidence" value="ECO:0007669"/>
    <property type="project" value="UniProtKB-SubCell"/>
</dbReference>
<dbReference type="GO" id="GO:0048471">
    <property type="term" value="C:perinuclear region of cytoplasm"/>
    <property type="evidence" value="ECO:0007669"/>
    <property type="project" value="UniProtKB-SubCell"/>
</dbReference>
<dbReference type="GO" id="GO:0005886">
    <property type="term" value="C:plasma membrane"/>
    <property type="evidence" value="ECO:0007669"/>
    <property type="project" value="UniProtKB-SubCell"/>
</dbReference>
<dbReference type="GO" id="GO:0016529">
    <property type="term" value="C:sarcoplasmic reticulum"/>
    <property type="evidence" value="ECO:0000314"/>
    <property type="project" value="BHF-UCL"/>
</dbReference>
<dbReference type="GO" id="GO:0005525">
    <property type="term" value="F:GTP binding"/>
    <property type="evidence" value="ECO:0007669"/>
    <property type="project" value="UniProtKB-KW"/>
</dbReference>
<dbReference type="GO" id="GO:0003924">
    <property type="term" value="F:GTPase activity"/>
    <property type="evidence" value="ECO:0007669"/>
    <property type="project" value="InterPro"/>
</dbReference>
<dbReference type="GO" id="GO:0045892">
    <property type="term" value="P:negative regulation of DNA-templated transcription"/>
    <property type="evidence" value="ECO:0007669"/>
    <property type="project" value="Ensembl"/>
</dbReference>
<dbReference type="GO" id="GO:0007263">
    <property type="term" value="P:nitric oxide mediated signal transduction"/>
    <property type="evidence" value="ECO:0007669"/>
    <property type="project" value="Ensembl"/>
</dbReference>
<dbReference type="CDD" id="cd04143">
    <property type="entry name" value="Rhes_like"/>
    <property type="match status" value="1"/>
</dbReference>
<dbReference type="FunFam" id="3.40.50.300:FF:000475">
    <property type="entry name" value="GTP-binding protein Rhes"/>
    <property type="match status" value="1"/>
</dbReference>
<dbReference type="Gene3D" id="3.40.50.300">
    <property type="entry name" value="P-loop containing nucleotide triphosphate hydrolases"/>
    <property type="match status" value="1"/>
</dbReference>
<dbReference type="InterPro" id="IPR027417">
    <property type="entry name" value="P-loop_NTPase"/>
</dbReference>
<dbReference type="InterPro" id="IPR005225">
    <property type="entry name" value="Small_GTP-bd"/>
</dbReference>
<dbReference type="InterPro" id="IPR001806">
    <property type="entry name" value="Small_GTPase"/>
</dbReference>
<dbReference type="InterPro" id="IPR052236">
    <property type="entry name" value="Small_GTPase_RasD"/>
</dbReference>
<dbReference type="NCBIfam" id="TIGR00231">
    <property type="entry name" value="small_GTP"/>
    <property type="match status" value="1"/>
</dbReference>
<dbReference type="PANTHER" id="PTHR46149:SF4">
    <property type="entry name" value="DEXAMETHASONE-INDUCED RAS-RELATED PROTEIN 1"/>
    <property type="match status" value="1"/>
</dbReference>
<dbReference type="PANTHER" id="PTHR46149">
    <property type="entry name" value="MIP08469P"/>
    <property type="match status" value="1"/>
</dbReference>
<dbReference type="Pfam" id="PF00071">
    <property type="entry name" value="Ras"/>
    <property type="match status" value="1"/>
</dbReference>
<dbReference type="PRINTS" id="PR00449">
    <property type="entry name" value="RASTRNSFRMNG"/>
</dbReference>
<dbReference type="SMART" id="SM00175">
    <property type="entry name" value="RAB"/>
    <property type="match status" value="1"/>
</dbReference>
<dbReference type="SMART" id="SM00176">
    <property type="entry name" value="RAN"/>
    <property type="match status" value="1"/>
</dbReference>
<dbReference type="SMART" id="SM00173">
    <property type="entry name" value="RAS"/>
    <property type="match status" value="1"/>
</dbReference>
<dbReference type="SMART" id="SM00174">
    <property type="entry name" value="RHO"/>
    <property type="match status" value="1"/>
</dbReference>
<dbReference type="SUPFAM" id="SSF52540">
    <property type="entry name" value="P-loop containing nucleoside triphosphate hydrolases"/>
    <property type="match status" value="1"/>
</dbReference>
<dbReference type="PROSITE" id="PS51421">
    <property type="entry name" value="RAS"/>
    <property type="match status" value="1"/>
</dbReference>
<sequence length="280" mass="31684">MKLAAMIKKMCPSDSELSIPAKNCYRMVILGSSKVGKTAIVSRFLTGRFEDAYTPTIEDFHRKFYSIRGEVYQLDILDTSGNHPFPAMRRLSILTGDVFILVFSLDNRDSFEEVQRLKQQILDTKSCLKNKTKENVDVPLVICGNKGDRDFYREVEQREIEQLVGDDPQRCAYFEISAKKNSSLDQMFRALFAMAKLPSEMSPDLHRKVSVQYCDVLHKKALRNKKLLRAGSGGGGDHGDAFGILAPFARRPSVHSDLMYIREKTSVGSQAKDKERCVIS</sequence>
<evidence type="ECO:0000250" key="1"/>
<evidence type="ECO:0000250" key="2">
    <source>
        <dbReference type="UniProtKB" id="Q9Y272"/>
    </source>
</evidence>
<evidence type="ECO:0000269" key="3">
    <source>
    </source>
</evidence>
<evidence type="ECO:0000269" key="4">
    <source>
    </source>
</evidence>
<evidence type="ECO:0000305" key="5"/>
<gene>
    <name type="primary">Rasd1</name>
    <name type="synonym">Dexras1</name>
</gene>
<feature type="chain" id="PRO_0000082718" description="Dexamethasone-induced Ras-related protein 1">
    <location>
        <begin position="1"/>
        <end position="277"/>
    </location>
</feature>
<feature type="propeptide" id="PRO_0000281373" description="Removed in mature form" evidence="1">
    <location>
        <begin position="278"/>
        <end position="280"/>
    </location>
</feature>
<feature type="short sequence motif" description="Effector region">
    <location>
        <begin position="53"/>
        <end position="61"/>
    </location>
</feature>
<feature type="binding site" evidence="1">
    <location>
        <begin position="31"/>
        <end position="38"/>
    </location>
    <ligand>
        <name>GTP</name>
        <dbReference type="ChEBI" id="CHEBI:37565"/>
    </ligand>
</feature>
<feature type="binding site" evidence="1">
    <location>
        <begin position="78"/>
        <end position="82"/>
    </location>
    <ligand>
        <name>GTP</name>
        <dbReference type="ChEBI" id="CHEBI:37565"/>
    </ligand>
</feature>
<feature type="binding site" evidence="1">
    <location>
        <begin position="145"/>
        <end position="148"/>
    </location>
    <ligand>
        <name>GTP</name>
        <dbReference type="ChEBI" id="CHEBI:37565"/>
    </ligand>
</feature>
<feature type="modified residue" description="S-nitrosocysteine" evidence="2">
    <location>
        <position position="11"/>
    </location>
</feature>
<feature type="modified residue" description="Cysteine methyl ester" evidence="1">
    <location>
        <position position="277"/>
    </location>
</feature>
<feature type="lipid moiety-binding region" description="S-farnesyl cysteine" evidence="1">
    <location>
        <position position="277"/>
    </location>
</feature>
<reference key="1">
    <citation type="journal article" date="1998" name="J. Biol. Chem.">
        <title>Dexamethasone rapidly induces a novel ras superfamily member-related gene in AtT-20 cells.</title>
        <authorList>
            <person name="Kemppainen R.J."/>
            <person name="Behrend E.N."/>
        </authorList>
    </citation>
    <scope>NUCLEOTIDE SEQUENCE [MRNA]</scope>
    <scope>TISSUE SPECIFICITY</scope>
    <scope>INDUCTION</scope>
</reference>
<reference key="2">
    <citation type="journal article" date="2005" name="Science">
        <title>The transcriptional landscape of the mammalian genome.</title>
        <authorList>
            <person name="Carninci P."/>
            <person name="Kasukawa T."/>
            <person name="Katayama S."/>
            <person name="Gough J."/>
            <person name="Frith M.C."/>
            <person name="Maeda N."/>
            <person name="Oyama R."/>
            <person name="Ravasi T."/>
            <person name="Lenhard B."/>
            <person name="Wells C."/>
            <person name="Kodzius R."/>
            <person name="Shimokawa K."/>
            <person name="Bajic V.B."/>
            <person name="Brenner S.E."/>
            <person name="Batalov S."/>
            <person name="Forrest A.R."/>
            <person name="Zavolan M."/>
            <person name="Davis M.J."/>
            <person name="Wilming L.G."/>
            <person name="Aidinis V."/>
            <person name="Allen J.E."/>
            <person name="Ambesi-Impiombato A."/>
            <person name="Apweiler R."/>
            <person name="Aturaliya R.N."/>
            <person name="Bailey T.L."/>
            <person name="Bansal M."/>
            <person name="Baxter L."/>
            <person name="Beisel K.W."/>
            <person name="Bersano T."/>
            <person name="Bono H."/>
            <person name="Chalk A.M."/>
            <person name="Chiu K.P."/>
            <person name="Choudhary V."/>
            <person name="Christoffels A."/>
            <person name="Clutterbuck D.R."/>
            <person name="Crowe M.L."/>
            <person name="Dalla E."/>
            <person name="Dalrymple B.P."/>
            <person name="de Bono B."/>
            <person name="Della Gatta G."/>
            <person name="di Bernardo D."/>
            <person name="Down T."/>
            <person name="Engstrom P."/>
            <person name="Fagiolini M."/>
            <person name="Faulkner G."/>
            <person name="Fletcher C.F."/>
            <person name="Fukushima T."/>
            <person name="Furuno M."/>
            <person name="Futaki S."/>
            <person name="Gariboldi M."/>
            <person name="Georgii-Hemming P."/>
            <person name="Gingeras T.R."/>
            <person name="Gojobori T."/>
            <person name="Green R.E."/>
            <person name="Gustincich S."/>
            <person name="Harbers M."/>
            <person name="Hayashi Y."/>
            <person name="Hensch T.K."/>
            <person name="Hirokawa N."/>
            <person name="Hill D."/>
            <person name="Huminiecki L."/>
            <person name="Iacono M."/>
            <person name="Ikeo K."/>
            <person name="Iwama A."/>
            <person name="Ishikawa T."/>
            <person name="Jakt M."/>
            <person name="Kanapin A."/>
            <person name="Katoh M."/>
            <person name="Kawasawa Y."/>
            <person name="Kelso J."/>
            <person name="Kitamura H."/>
            <person name="Kitano H."/>
            <person name="Kollias G."/>
            <person name="Krishnan S.P."/>
            <person name="Kruger A."/>
            <person name="Kummerfeld S.K."/>
            <person name="Kurochkin I.V."/>
            <person name="Lareau L.F."/>
            <person name="Lazarevic D."/>
            <person name="Lipovich L."/>
            <person name="Liu J."/>
            <person name="Liuni S."/>
            <person name="McWilliam S."/>
            <person name="Madan Babu M."/>
            <person name="Madera M."/>
            <person name="Marchionni L."/>
            <person name="Matsuda H."/>
            <person name="Matsuzawa S."/>
            <person name="Miki H."/>
            <person name="Mignone F."/>
            <person name="Miyake S."/>
            <person name="Morris K."/>
            <person name="Mottagui-Tabar S."/>
            <person name="Mulder N."/>
            <person name="Nakano N."/>
            <person name="Nakauchi H."/>
            <person name="Ng P."/>
            <person name="Nilsson R."/>
            <person name="Nishiguchi S."/>
            <person name="Nishikawa S."/>
            <person name="Nori F."/>
            <person name="Ohara O."/>
            <person name="Okazaki Y."/>
            <person name="Orlando V."/>
            <person name="Pang K.C."/>
            <person name="Pavan W.J."/>
            <person name="Pavesi G."/>
            <person name="Pesole G."/>
            <person name="Petrovsky N."/>
            <person name="Piazza S."/>
            <person name="Reed J."/>
            <person name="Reid J.F."/>
            <person name="Ring B.Z."/>
            <person name="Ringwald M."/>
            <person name="Rost B."/>
            <person name="Ruan Y."/>
            <person name="Salzberg S.L."/>
            <person name="Sandelin A."/>
            <person name="Schneider C."/>
            <person name="Schoenbach C."/>
            <person name="Sekiguchi K."/>
            <person name="Semple C.A."/>
            <person name="Seno S."/>
            <person name="Sessa L."/>
            <person name="Sheng Y."/>
            <person name="Shibata Y."/>
            <person name="Shimada H."/>
            <person name="Shimada K."/>
            <person name="Silva D."/>
            <person name="Sinclair B."/>
            <person name="Sperling S."/>
            <person name="Stupka E."/>
            <person name="Sugiura K."/>
            <person name="Sultana R."/>
            <person name="Takenaka Y."/>
            <person name="Taki K."/>
            <person name="Tammoja K."/>
            <person name="Tan S.L."/>
            <person name="Tang S."/>
            <person name="Taylor M.S."/>
            <person name="Tegner J."/>
            <person name="Teichmann S.A."/>
            <person name="Ueda H.R."/>
            <person name="van Nimwegen E."/>
            <person name="Verardo R."/>
            <person name="Wei C.L."/>
            <person name="Yagi K."/>
            <person name="Yamanishi H."/>
            <person name="Zabarovsky E."/>
            <person name="Zhu S."/>
            <person name="Zimmer A."/>
            <person name="Hide W."/>
            <person name="Bult C."/>
            <person name="Grimmond S.M."/>
            <person name="Teasdale R.D."/>
            <person name="Liu E.T."/>
            <person name="Brusic V."/>
            <person name="Quackenbush J."/>
            <person name="Wahlestedt C."/>
            <person name="Mattick J.S."/>
            <person name="Hume D.A."/>
            <person name="Kai C."/>
            <person name="Sasaki D."/>
            <person name="Tomaru Y."/>
            <person name="Fukuda S."/>
            <person name="Kanamori-Katayama M."/>
            <person name="Suzuki M."/>
            <person name="Aoki J."/>
            <person name="Arakawa T."/>
            <person name="Iida J."/>
            <person name="Imamura K."/>
            <person name="Itoh M."/>
            <person name="Kato T."/>
            <person name="Kawaji H."/>
            <person name="Kawagashira N."/>
            <person name="Kawashima T."/>
            <person name="Kojima M."/>
            <person name="Kondo S."/>
            <person name="Konno H."/>
            <person name="Nakano K."/>
            <person name="Ninomiya N."/>
            <person name="Nishio T."/>
            <person name="Okada M."/>
            <person name="Plessy C."/>
            <person name="Shibata K."/>
            <person name="Shiraki T."/>
            <person name="Suzuki S."/>
            <person name="Tagami M."/>
            <person name="Waki K."/>
            <person name="Watahiki A."/>
            <person name="Okamura-Oho Y."/>
            <person name="Suzuki H."/>
            <person name="Kawai J."/>
            <person name="Hayashizaki Y."/>
        </authorList>
    </citation>
    <scope>NUCLEOTIDE SEQUENCE [LARGE SCALE MRNA]</scope>
    <source>
        <strain>C57BL/6J</strain>
        <tissue>Hypothalamus</tissue>
    </source>
</reference>
<reference key="3">
    <citation type="journal article" date="2004" name="Genome Res.">
        <title>The status, quality, and expansion of the NIH full-length cDNA project: the Mammalian Gene Collection (MGC).</title>
        <authorList>
            <consortium name="The MGC Project Team"/>
        </authorList>
    </citation>
    <scope>NUCLEOTIDE SEQUENCE [LARGE SCALE MRNA]</scope>
    <source>
        <tissue>Colon</tissue>
    </source>
</reference>
<reference key="4">
    <citation type="journal article" date="2000" name="Neuron">
        <title>Dexras1: a G protein specifically coupled to neuronal nitric oxide synthase via CAPON.</title>
        <authorList>
            <person name="Fang M."/>
            <person name="Jaffrey S.R."/>
            <person name="Sawa A."/>
            <person name="Ye K."/>
            <person name="Luo X."/>
            <person name="Snyder S.H."/>
        </authorList>
    </citation>
    <scope>INTERACTION WITH CAPON AND NOS1</scope>
    <scope>S-NITROSYLATION</scope>
</reference>
<organism>
    <name type="scientific">Mus musculus</name>
    <name type="common">Mouse</name>
    <dbReference type="NCBI Taxonomy" id="10090"/>
    <lineage>
        <taxon>Eukaryota</taxon>
        <taxon>Metazoa</taxon>
        <taxon>Chordata</taxon>
        <taxon>Craniata</taxon>
        <taxon>Vertebrata</taxon>
        <taxon>Euteleostomi</taxon>
        <taxon>Mammalia</taxon>
        <taxon>Eutheria</taxon>
        <taxon>Euarchontoglires</taxon>
        <taxon>Glires</taxon>
        <taxon>Rodentia</taxon>
        <taxon>Myomorpha</taxon>
        <taxon>Muroidea</taxon>
        <taxon>Muridae</taxon>
        <taxon>Murinae</taxon>
        <taxon>Mus</taxon>
        <taxon>Mus</taxon>
    </lineage>
</organism>
<accession>O35626</accession>
<keyword id="KW-1003">Cell membrane</keyword>
<keyword id="KW-0963">Cytoplasm</keyword>
<keyword id="KW-0342">GTP-binding</keyword>
<keyword id="KW-0449">Lipoprotein</keyword>
<keyword id="KW-0472">Membrane</keyword>
<keyword id="KW-0488">Methylation</keyword>
<keyword id="KW-0547">Nucleotide-binding</keyword>
<keyword id="KW-0539">Nucleus</keyword>
<keyword id="KW-0636">Prenylation</keyword>
<keyword id="KW-1185">Reference proteome</keyword>
<keyword id="KW-0702">S-nitrosylation</keyword>
<protein>
    <recommendedName>
        <fullName>Dexamethasone-induced Ras-related protein 1</fullName>
    </recommendedName>
</protein>
<comment type="function">
    <text evidence="1">Small GTPase. Negatively regulates the transcription regulation activity of the APBB1/FE65-APP complex via its interaction with APBB1/FE65 (By similarity).</text>
</comment>
<comment type="subunit">
    <text evidence="1 3">Component of a complex, at least composed of APBB1, RASD1/DEXRAS1 and APP. Interacts with APBB1/FE65 (By similarity). Forms a ternary complex with CAPON and NOS1.</text>
</comment>
<comment type="interaction">
    <interactant intactId="EBI-4319979">
        <id>O35626</id>
    </interactant>
    <interactant intactId="EBI-4319956">
        <id>P43136</id>
        <label>Nr2f6</label>
    </interactant>
    <organismsDiffer>false</organismsDiffer>
    <experiments>5</experiments>
</comment>
<comment type="subcellular location">
    <subcellularLocation>
        <location evidence="5">Cell membrane</location>
        <topology evidence="5">Lipid-anchor</topology>
        <orientation evidence="5">Cytoplasmic side</orientation>
    </subcellularLocation>
    <subcellularLocation>
        <location evidence="1">Cytoplasm</location>
        <location evidence="1">Perinuclear region</location>
    </subcellularLocation>
    <subcellularLocation>
        <location evidence="1">Nucleus</location>
    </subcellularLocation>
</comment>
<comment type="tissue specificity">
    <text evidence="4">Expressed in brain, heart, kidney and liver.</text>
</comment>
<comment type="induction">
    <text evidence="4">By dexamethasone.</text>
</comment>
<comment type="PTM">
    <text evidence="3">S-nitrosylation stimulates guanine-nucleotide exchange activity.</text>
</comment>
<comment type="similarity">
    <text evidence="5">Belongs to the small GTPase superfamily. RasD family.</text>
</comment>